<reference key="1">
    <citation type="journal article" date="2000" name="Science">
        <title>The genome sequence of Drosophila melanogaster.</title>
        <authorList>
            <person name="Adams M.D."/>
            <person name="Celniker S.E."/>
            <person name="Holt R.A."/>
            <person name="Evans C.A."/>
            <person name="Gocayne J.D."/>
            <person name="Amanatides P.G."/>
            <person name="Scherer S.E."/>
            <person name="Li P.W."/>
            <person name="Hoskins R.A."/>
            <person name="Galle R.F."/>
            <person name="George R.A."/>
            <person name="Lewis S.E."/>
            <person name="Richards S."/>
            <person name="Ashburner M."/>
            <person name="Henderson S.N."/>
            <person name="Sutton G.G."/>
            <person name="Wortman J.R."/>
            <person name="Yandell M.D."/>
            <person name="Zhang Q."/>
            <person name="Chen L.X."/>
            <person name="Brandon R.C."/>
            <person name="Rogers Y.-H.C."/>
            <person name="Blazej R.G."/>
            <person name="Champe M."/>
            <person name="Pfeiffer B.D."/>
            <person name="Wan K.H."/>
            <person name="Doyle C."/>
            <person name="Baxter E.G."/>
            <person name="Helt G."/>
            <person name="Nelson C.R."/>
            <person name="Miklos G.L.G."/>
            <person name="Abril J.F."/>
            <person name="Agbayani A."/>
            <person name="An H.-J."/>
            <person name="Andrews-Pfannkoch C."/>
            <person name="Baldwin D."/>
            <person name="Ballew R.M."/>
            <person name="Basu A."/>
            <person name="Baxendale J."/>
            <person name="Bayraktaroglu L."/>
            <person name="Beasley E.M."/>
            <person name="Beeson K.Y."/>
            <person name="Benos P.V."/>
            <person name="Berman B.P."/>
            <person name="Bhandari D."/>
            <person name="Bolshakov S."/>
            <person name="Borkova D."/>
            <person name="Botchan M.R."/>
            <person name="Bouck J."/>
            <person name="Brokstein P."/>
            <person name="Brottier P."/>
            <person name="Burtis K.C."/>
            <person name="Busam D.A."/>
            <person name="Butler H."/>
            <person name="Cadieu E."/>
            <person name="Center A."/>
            <person name="Chandra I."/>
            <person name="Cherry J.M."/>
            <person name="Cawley S."/>
            <person name="Dahlke C."/>
            <person name="Davenport L.B."/>
            <person name="Davies P."/>
            <person name="de Pablos B."/>
            <person name="Delcher A."/>
            <person name="Deng Z."/>
            <person name="Mays A.D."/>
            <person name="Dew I."/>
            <person name="Dietz S.M."/>
            <person name="Dodson K."/>
            <person name="Doup L.E."/>
            <person name="Downes M."/>
            <person name="Dugan-Rocha S."/>
            <person name="Dunkov B.C."/>
            <person name="Dunn P."/>
            <person name="Durbin K.J."/>
            <person name="Evangelista C.C."/>
            <person name="Ferraz C."/>
            <person name="Ferriera S."/>
            <person name="Fleischmann W."/>
            <person name="Fosler C."/>
            <person name="Gabrielian A.E."/>
            <person name="Garg N.S."/>
            <person name="Gelbart W.M."/>
            <person name="Glasser K."/>
            <person name="Glodek A."/>
            <person name="Gong F."/>
            <person name="Gorrell J.H."/>
            <person name="Gu Z."/>
            <person name="Guan P."/>
            <person name="Harris M."/>
            <person name="Harris N.L."/>
            <person name="Harvey D.A."/>
            <person name="Heiman T.J."/>
            <person name="Hernandez J.R."/>
            <person name="Houck J."/>
            <person name="Hostin D."/>
            <person name="Houston K.A."/>
            <person name="Howland T.J."/>
            <person name="Wei M.-H."/>
            <person name="Ibegwam C."/>
            <person name="Jalali M."/>
            <person name="Kalush F."/>
            <person name="Karpen G.H."/>
            <person name="Ke Z."/>
            <person name="Kennison J.A."/>
            <person name="Ketchum K.A."/>
            <person name="Kimmel B.E."/>
            <person name="Kodira C.D."/>
            <person name="Kraft C.L."/>
            <person name="Kravitz S."/>
            <person name="Kulp D."/>
            <person name="Lai Z."/>
            <person name="Lasko P."/>
            <person name="Lei Y."/>
            <person name="Levitsky A.A."/>
            <person name="Li J.H."/>
            <person name="Li Z."/>
            <person name="Liang Y."/>
            <person name="Lin X."/>
            <person name="Liu X."/>
            <person name="Mattei B."/>
            <person name="McIntosh T.C."/>
            <person name="McLeod M.P."/>
            <person name="McPherson D."/>
            <person name="Merkulov G."/>
            <person name="Milshina N.V."/>
            <person name="Mobarry C."/>
            <person name="Morris J."/>
            <person name="Moshrefi A."/>
            <person name="Mount S.M."/>
            <person name="Moy M."/>
            <person name="Murphy B."/>
            <person name="Murphy L."/>
            <person name="Muzny D.M."/>
            <person name="Nelson D.L."/>
            <person name="Nelson D.R."/>
            <person name="Nelson K.A."/>
            <person name="Nixon K."/>
            <person name="Nusskern D.R."/>
            <person name="Pacleb J.M."/>
            <person name="Palazzolo M."/>
            <person name="Pittman G.S."/>
            <person name="Pan S."/>
            <person name="Pollard J."/>
            <person name="Puri V."/>
            <person name="Reese M.G."/>
            <person name="Reinert K."/>
            <person name="Remington K."/>
            <person name="Saunders R.D.C."/>
            <person name="Scheeler F."/>
            <person name="Shen H."/>
            <person name="Shue B.C."/>
            <person name="Siden-Kiamos I."/>
            <person name="Simpson M."/>
            <person name="Skupski M.P."/>
            <person name="Smith T.J."/>
            <person name="Spier E."/>
            <person name="Spradling A.C."/>
            <person name="Stapleton M."/>
            <person name="Strong R."/>
            <person name="Sun E."/>
            <person name="Svirskas R."/>
            <person name="Tector C."/>
            <person name="Turner R."/>
            <person name="Venter E."/>
            <person name="Wang A.H."/>
            <person name="Wang X."/>
            <person name="Wang Z.-Y."/>
            <person name="Wassarman D.A."/>
            <person name="Weinstock G.M."/>
            <person name="Weissenbach J."/>
            <person name="Williams S.M."/>
            <person name="Woodage T."/>
            <person name="Worley K.C."/>
            <person name="Wu D."/>
            <person name="Yang S."/>
            <person name="Yao Q.A."/>
            <person name="Ye J."/>
            <person name="Yeh R.-F."/>
            <person name="Zaveri J.S."/>
            <person name="Zhan M."/>
            <person name="Zhang G."/>
            <person name="Zhao Q."/>
            <person name="Zheng L."/>
            <person name="Zheng X.H."/>
            <person name="Zhong F.N."/>
            <person name="Zhong W."/>
            <person name="Zhou X."/>
            <person name="Zhu S.C."/>
            <person name="Zhu X."/>
            <person name="Smith H.O."/>
            <person name="Gibbs R.A."/>
            <person name="Myers E.W."/>
            <person name="Rubin G.M."/>
            <person name="Venter J.C."/>
        </authorList>
    </citation>
    <scope>NUCLEOTIDE SEQUENCE [LARGE SCALE GENOMIC DNA]</scope>
    <source>
        <strain>Berkeley</strain>
    </source>
</reference>
<reference key="2">
    <citation type="journal article" date="2002" name="Genome Biol.">
        <title>Annotation of the Drosophila melanogaster euchromatic genome: a systematic review.</title>
        <authorList>
            <person name="Misra S."/>
            <person name="Crosby M.A."/>
            <person name="Mungall C.J."/>
            <person name="Matthews B.B."/>
            <person name="Campbell K.S."/>
            <person name="Hradecky P."/>
            <person name="Huang Y."/>
            <person name="Kaminker J.S."/>
            <person name="Millburn G.H."/>
            <person name="Prochnik S.E."/>
            <person name="Smith C.D."/>
            <person name="Tupy J.L."/>
            <person name="Whitfield E.J."/>
            <person name="Bayraktaroglu L."/>
            <person name="Berman B.P."/>
            <person name="Bettencourt B.R."/>
            <person name="Celniker S.E."/>
            <person name="de Grey A.D.N.J."/>
            <person name="Drysdale R.A."/>
            <person name="Harris N.L."/>
            <person name="Richter J."/>
            <person name="Russo S."/>
            <person name="Schroeder A.J."/>
            <person name="Shu S.Q."/>
            <person name="Stapleton M."/>
            <person name="Yamada C."/>
            <person name="Ashburner M."/>
            <person name="Gelbart W.M."/>
            <person name="Rubin G.M."/>
            <person name="Lewis S.E."/>
        </authorList>
    </citation>
    <scope>GENOME REANNOTATION</scope>
    <source>
        <strain>Berkeley</strain>
    </source>
</reference>
<reference key="3">
    <citation type="journal article" date="2002" name="Genome Biol.">
        <title>A Drosophila full-length cDNA resource.</title>
        <authorList>
            <person name="Stapleton M."/>
            <person name="Carlson J.W."/>
            <person name="Brokstein P."/>
            <person name="Yu C."/>
            <person name="Champe M."/>
            <person name="George R.A."/>
            <person name="Guarin H."/>
            <person name="Kronmiller B."/>
            <person name="Pacleb J.M."/>
            <person name="Park S."/>
            <person name="Wan K.H."/>
            <person name="Rubin G.M."/>
            <person name="Celniker S.E."/>
        </authorList>
    </citation>
    <scope>NUCLEOTIDE SEQUENCE [LARGE SCALE MRNA]</scope>
    <source>
        <strain>Berkeley</strain>
        <tissue>Embryo</tissue>
    </source>
</reference>
<reference key="4">
    <citation type="journal article" date="2010" name="Mol. Cell. Neurosci.">
        <title>SIDL interacts with the dendritic targeting motif of Shal (K(v)4) K+ channels in Drosophila.</title>
        <authorList>
            <person name="Diao F."/>
            <person name="Chaufty J."/>
            <person name="Waro G."/>
            <person name="Tsunoda S."/>
        </authorList>
    </citation>
    <scope>FUNCTION</scope>
    <scope>INTERACTION WITH SHAL</scope>
    <scope>SUBCELLULAR LOCATION</scope>
    <scope>TISSUE SPECIFICITY</scope>
    <scope>DEVELOPMENTAL STAGE</scope>
</reference>
<dbReference type="EMBL" id="AE014297">
    <property type="protein sequence ID" value="AAF55143.1"/>
    <property type="molecule type" value="Genomic_DNA"/>
</dbReference>
<dbReference type="EMBL" id="AY118591">
    <property type="protein sequence ID" value="AAM49960.1"/>
    <property type="molecule type" value="mRNA"/>
</dbReference>
<dbReference type="RefSeq" id="NP_650431.1">
    <property type="nucleotide sequence ID" value="NM_142174.3"/>
</dbReference>
<dbReference type="BioGRID" id="66897">
    <property type="interactions" value="10"/>
</dbReference>
<dbReference type="ComplexPortal" id="CPX-2271">
    <property type="entry name" value="TRAPPII complex"/>
</dbReference>
<dbReference type="FunCoup" id="Q9VFB7">
    <property type="interactions" value="1173"/>
</dbReference>
<dbReference type="IntAct" id="Q9VFB7">
    <property type="interactions" value="9"/>
</dbReference>
<dbReference type="STRING" id="7227.FBpp0082592"/>
<dbReference type="PaxDb" id="7227-FBpp0082592"/>
<dbReference type="DNASU" id="41833"/>
<dbReference type="EnsemblMetazoa" id="FBtr0083138">
    <property type="protein sequence ID" value="FBpp0082592"/>
    <property type="gene ID" value="FBgn0038303"/>
</dbReference>
<dbReference type="GeneID" id="41833"/>
<dbReference type="KEGG" id="dme:Dmel_CG6623"/>
<dbReference type="UCSC" id="CG6623-RA">
    <property type="organism name" value="d. melanogaster"/>
</dbReference>
<dbReference type="AGR" id="FB:FBgn0038303"/>
<dbReference type="CTD" id="41833"/>
<dbReference type="FlyBase" id="FBgn0038303">
    <property type="gene designation" value="SIDL"/>
</dbReference>
<dbReference type="VEuPathDB" id="VectorBase:FBgn0038303"/>
<dbReference type="eggNOG" id="KOG1931">
    <property type="taxonomic scope" value="Eukaryota"/>
</dbReference>
<dbReference type="GeneTree" id="ENSGT00390000003873"/>
<dbReference type="HOGENOM" id="CLU_006893_0_0_1"/>
<dbReference type="InParanoid" id="Q9VFB7"/>
<dbReference type="OMA" id="TKVHENP"/>
<dbReference type="OrthoDB" id="10256906at2759"/>
<dbReference type="PhylomeDB" id="Q9VFB7"/>
<dbReference type="Reactome" id="R-DME-204005">
    <property type="pathway name" value="COPII-mediated vesicle transport"/>
</dbReference>
<dbReference type="Reactome" id="R-DME-8876198">
    <property type="pathway name" value="RAB GEFs exchange GTP for GDP on RABs"/>
</dbReference>
<dbReference type="SignaLink" id="Q9VFB7"/>
<dbReference type="BioGRID-ORCS" id="41833">
    <property type="hits" value="0 hits in 1 CRISPR screen"/>
</dbReference>
<dbReference type="ChiTaRS" id="SIDL">
    <property type="organism name" value="fly"/>
</dbReference>
<dbReference type="GenomeRNAi" id="41833"/>
<dbReference type="PRO" id="PR:Q9VFB7"/>
<dbReference type="Proteomes" id="UP000000803">
    <property type="component" value="Chromosome 3R"/>
</dbReference>
<dbReference type="Bgee" id="FBgn0038303">
    <property type="expression patterns" value="Expressed in midgut large flat cell (Drosophila) in digestive tract and 75 other cell types or tissues"/>
</dbReference>
<dbReference type="GO" id="GO:0005829">
    <property type="term" value="C:cytosol"/>
    <property type="evidence" value="ECO:0007669"/>
    <property type="project" value="GOC"/>
</dbReference>
<dbReference type="GO" id="GO:0030425">
    <property type="term" value="C:dendrite"/>
    <property type="evidence" value="ECO:0007669"/>
    <property type="project" value="UniProtKB-SubCell"/>
</dbReference>
<dbReference type="GO" id="GO:0005794">
    <property type="term" value="C:Golgi apparatus"/>
    <property type="evidence" value="ECO:0000314"/>
    <property type="project" value="FlyBase"/>
</dbReference>
<dbReference type="GO" id="GO:0043204">
    <property type="term" value="C:perikaryon"/>
    <property type="evidence" value="ECO:0007669"/>
    <property type="project" value="UniProtKB-SubCell"/>
</dbReference>
<dbReference type="GO" id="GO:0030008">
    <property type="term" value="C:TRAPP complex"/>
    <property type="evidence" value="ECO:0000250"/>
    <property type="project" value="FlyBase"/>
</dbReference>
<dbReference type="GO" id="GO:1990071">
    <property type="term" value="C:TRAPPII protein complex"/>
    <property type="evidence" value="ECO:0000314"/>
    <property type="project" value="FlyBase"/>
</dbReference>
<dbReference type="GO" id="GO:0034498">
    <property type="term" value="P:early endosome to Golgi transport"/>
    <property type="evidence" value="ECO:0000318"/>
    <property type="project" value="GO_Central"/>
</dbReference>
<dbReference type="GO" id="GO:0048193">
    <property type="term" value="P:Golgi vesicle transport"/>
    <property type="evidence" value="ECO:0000305"/>
    <property type="project" value="FlyBase"/>
</dbReference>
<dbReference type="GO" id="GO:0006891">
    <property type="term" value="P:intra-Golgi vesicle-mediated transport"/>
    <property type="evidence" value="ECO:0000250"/>
    <property type="project" value="FlyBase"/>
</dbReference>
<dbReference type="InterPro" id="IPR056917">
    <property type="entry name" value="Ig_TRAPPC10"/>
</dbReference>
<dbReference type="InterPro" id="IPR022233">
    <property type="entry name" value="TRAPP_II_complex_TRAPPC10_C"/>
</dbReference>
<dbReference type="InterPro" id="IPR045126">
    <property type="entry name" value="TRAPPC10/Trs130"/>
</dbReference>
<dbReference type="InterPro" id="IPR056913">
    <property type="entry name" value="TRAPPC10/Trs130_N"/>
</dbReference>
<dbReference type="PANTHER" id="PTHR13251">
    <property type="entry name" value="EPILEPSY HOLOPROSENCEPHALY CANDIDATE 1/TMEM1"/>
    <property type="match status" value="1"/>
</dbReference>
<dbReference type="PANTHER" id="PTHR13251:SF3">
    <property type="entry name" value="TRAFFICKING PROTEIN PARTICLE COMPLEX SUBUNIT 10"/>
    <property type="match status" value="1"/>
</dbReference>
<dbReference type="Pfam" id="PF23604">
    <property type="entry name" value="Ig_TRAPPC10"/>
    <property type="match status" value="1"/>
</dbReference>
<dbReference type="Pfam" id="PF12584">
    <property type="entry name" value="TRAPPC10"/>
    <property type="match status" value="1"/>
</dbReference>
<dbReference type="Pfam" id="PF23036">
    <property type="entry name" value="TRAPPC10_1st"/>
    <property type="match status" value="1"/>
</dbReference>
<evidence type="ECO:0000250" key="1"/>
<evidence type="ECO:0000269" key="2">
    <source>
    </source>
</evidence>
<evidence type="ECO:0000305" key="3"/>
<sequence length="1145" mass="130804">MQIKPIITYSGSCPLFRSLESQILNAIPLDTCEWRRTFQRPTKHVRLEAQAQQFNVAALEKYKQGDWSILEHPILHIFVTECNDVDTYKATIREAIDIWLKTLTSYGVSDWMILLVETLDMRKTKNFMPRTTVLDKIRLDFGTKNDDRCISVLNPAKFEQKSTESFRCLVQRIRFLMLTSYNRNIVKYEELIRSKREKRNIEGWDFRQYFFMQEDLALIFEKLELPTEALIQYDELDAMFSQFITHTGLNEKQQWLNHFRKPLDAFHGICLTRADKFEMRNKIRDEGVSLLEFRNYLFERQAYLLLTCNDIPEIAKRLLNFLFSTLREVELIKLECQEGALCCWEFVCALEVLQLCEQAMEPNELTCFQHCAPIWNLAKDKLYELGKLCGLLPGCTPTSEQLHIVVQLSSGIGDAPSEQHQFLQATPQLRDRSPNRKPKKSGAEQLKEALGSNQAFQKLYLELAELAISTYKHVTRLRSARLVGLDLGNFYCALNEPHKAVGFFTDLLRELKAENWHMLSSQTLLELANCYRKMGDSLAYTKTCSSISCCAELETLVRTFYFDEFLKSLKTLKTTLSAQPSIENANYCVLEDHFRILDIEVVNQKPIIQDDYILVQLKVESLYPRGVVAENVKLCYELEASSLELAMENVSLTASPSTVKAKDTSSRLKVSLQLVYKQDNRLHSAAVACDLPKSKQPVRRTSSTKRKLSPSVQADFTNFVQAENIALQPGVNLIEMKAKATRVGCWQFKQLCISMSSLEFLSEQLPFMPATFEISTKPASATLEFKTLIAGIVQPISLNVSGGSFIFPPDAKITLRCSKNLRIRQARNTDDEAAYNDDQSFESTLQVPLVQFKSFEERRIPLEVLTDMPGRKVSKHHEHHIALNCPWSRTELPIAVDFQPAMEATCRLHTCGTQKFLQVIMKGMEAHLLLQHAQVKCDVPGVQLLDLNPESQQPIEIYKSLTVTYLYEIQVEPLKTEHELPVVKVHFVIKYASLSQPDVWRTYGCAFDLVDYTTLFKLQAQLEPNELCRLRTVCNMNLKITKVHENPYTDLMYEVLNDQNLWAVCGRSAGVVSMKDVDSHSISLDVMPLSTGFLPMPSIRLSKYTAGGKSKTDGHSKVHPFPPGQVYNSTKSMQIHVIASVAGDQ</sequence>
<name>TPC10_DROME</name>
<gene>
    <name type="primary">SIDL</name>
    <name type="ORF">CG6623</name>
</gene>
<comment type="function">
    <text evidence="1 2">May play a role in vesicular transport from endoplasmic reticulum to Golgi (By similarity). Has a role in one of the several mechanisms underlying dendritic localization of Shal channels.</text>
</comment>
<comment type="subunit">
    <text evidence="1 2">Part of the multisubunit TRAPP (transport protein particle) complex (By similarity). Interacts with Shal (via C-terminal dendritic targeting motif).</text>
</comment>
<comment type="subcellular location">
    <subcellularLocation>
        <location evidence="1">Golgi apparatus</location>
        <location evidence="1">cis-Golgi network</location>
    </subcellularLocation>
    <subcellularLocation>
        <location evidence="2">Cell projection</location>
        <location evidence="2">Dendrite</location>
    </subcellularLocation>
    <subcellularLocation>
        <location evidence="2">Perikaryon</location>
    </subcellularLocation>
</comment>
<comment type="tissue specificity">
    <text evidence="2">Co-expressed with Shal in the nervous system.</text>
</comment>
<comment type="developmental stage">
    <text evidence="2">Expressed throughout development from 5 hours after egg laying though to adults.</text>
</comment>
<comment type="similarity">
    <text evidence="3">Belongs to the TMEM1 family.</text>
</comment>
<keyword id="KW-0966">Cell projection</keyword>
<keyword id="KW-0931">ER-Golgi transport</keyword>
<keyword id="KW-0333">Golgi apparatus</keyword>
<keyword id="KW-1185">Reference proteome</keyword>
<keyword id="KW-0813">Transport</keyword>
<organism>
    <name type="scientific">Drosophila melanogaster</name>
    <name type="common">Fruit fly</name>
    <dbReference type="NCBI Taxonomy" id="7227"/>
    <lineage>
        <taxon>Eukaryota</taxon>
        <taxon>Metazoa</taxon>
        <taxon>Ecdysozoa</taxon>
        <taxon>Arthropoda</taxon>
        <taxon>Hexapoda</taxon>
        <taxon>Insecta</taxon>
        <taxon>Pterygota</taxon>
        <taxon>Neoptera</taxon>
        <taxon>Endopterygota</taxon>
        <taxon>Diptera</taxon>
        <taxon>Brachycera</taxon>
        <taxon>Muscomorpha</taxon>
        <taxon>Ephydroidea</taxon>
        <taxon>Drosophilidae</taxon>
        <taxon>Drosophila</taxon>
        <taxon>Sophophora</taxon>
    </lineage>
</organism>
<protein>
    <recommendedName>
        <fullName>Trafficking protein particle complex subunit 10</fullName>
    </recommendedName>
    <alternativeName>
        <fullName>Shal Interactor of Di-Leucine Motif</fullName>
    </alternativeName>
    <alternativeName>
        <fullName>Trafficking protein particle complex subunit TMEM1</fullName>
    </alternativeName>
    <alternativeName>
        <fullName>Transport protein particle subunit TMEM1</fullName>
        <shortName>TRAPP subunit TMEM1</shortName>
    </alternativeName>
</protein>
<feature type="chain" id="PRO_0000193510" description="Trafficking protein particle complex subunit 10">
    <location>
        <begin position="1"/>
        <end position="1145"/>
    </location>
</feature>
<accession>Q9VFB7</accession>
<accession>Q540Y2</accession>
<proteinExistence type="evidence at protein level"/>